<reference key="1">
    <citation type="journal article" date="2009" name="J. Bacteriol.">
        <title>Genomic sequencing reveals regulatory mutations and recombinational events in the widely used MC4100 lineage of Escherichia coli K-12.</title>
        <authorList>
            <person name="Ferenci T."/>
            <person name="Zhou Z."/>
            <person name="Betteridge T."/>
            <person name="Ren Y."/>
            <person name="Liu Y."/>
            <person name="Feng L."/>
            <person name="Reeves P.R."/>
            <person name="Wang L."/>
        </authorList>
    </citation>
    <scope>NUCLEOTIDE SEQUENCE [LARGE SCALE GENOMIC DNA]</scope>
    <source>
        <strain>K12 / MC4100 / BW2952</strain>
    </source>
</reference>
<proteinExistence type="inferred from homology"/>
<sequence length="276" mass="31307">MLMITSFANPRVAQAFVDYMATQGVILTIQQHNQSDVWLADESQAERVRAELARFLENPADPRYLAASWQAGHTGSGLHYRRYPFFAALRERAGPVTWVMMIACVVVFIAMQILGDQEVMLWLAWPFDPTLKFEFWRYFTHALMHFSLMHILFNLLWWWYLGGAVEKRLGSGKLIVITLISALLSGYVQQKFSGPWFGGLSGVVYALMGYVWLRGERDPQSGIYLQRGLIIFALIWIVAGWFDLFGMSMANGAHIAGLAVGLAMAFVDSLNARKRK</sequence>
<accession>C4ZVX5</accession>
<feature type="chain" id="PRO_1000215653" description="Rhomboid protease GlpG">
    <location>
        <begin position="1"/>
        <end position="276"/>
    </location>
</feature>
<feature type="transmembrane region" description="Helical" evidence="1">
    <location>
        <begin position="94"/>
        <end position="114"/>
    </location>
</feature>
<feature type="transmembrane region" description="Helical" evidence="1">
    <location>
        <begin position="142"/>
        <end position="162"/>
    </location>
</feature>
<feature type="transmembrane region" description="Helical" evidence="1">
    <location>
        <begin position="169"/>
        <end position="189"/>
    </location>
</feature>
<feature type="transmembrane region" description="Helical" evidence="1">
    <location>
        <begin position="192"/>
        <end position="212"/>
    </location>
</feature>
<feature type="transmembrane region" description="Helical" evidence="1">
    <location>
        <begin position="229"/>
        <end position="249"/>
    </location>
</feature>
<feature type="transmembrane region" description="Helical" evidence="1">
    <location>
        <begin position="250"/>
        <end position="270"/>
    </location>
</feature>
<feature type="active site" description="Nucleophile" evidence="1">
    <location>
        <position position="201"/>
    </location>
</feature>
<feature type="active site" evidence="1">
    <location>
        <position position="254"/>
    </location>
</feature>
<evidence type="ECO:0000255" key="1">
    <source>
        <dbReference type="HAMAP-Rule" id="MF_01594"/>
    </source>
</evidence>
<protein>
    <recommendedName>
        <fullName evidence="1">Rhomboid protease GlpG</fullName>
        <ecNumber evidence="1">3.4.21.105</ecNumber>
    </recommendedName>
    <alternativeName>
        <fullName evidence="1">Intramembrane serine protease</fullName>
    </alternativeName>
</protein>
<comment type="function">
    <text evidence="1">Rhomboid-type serine protease that catalyzes intramembrane proteolysis.</text>
</comment>
<comment type="catalytic activity">
    <reaction evidence="1">
        <text>Cleaves type-1 transmembrane domains using a catalytic dyad composed of serine and histidine that are contributed by different transmembrane domains.</text>
        <dbReference type="EC" id="3.4.21.105"/>
    </reaction>
</comment>
<comment type="subcellular location">
    <subcellularLocation>
        <location evidence="1">Cell inner membrane</location>
        <topology evidence="1">Multi-pass membrane protein</topology>
    </subcellularLocation>
</comment>
<comment type="similarity">
    <text evidence="1">Belongs to the peptidase S54 family.</text>
</comment>
<gene>
    <name evidence="1" type="primary">glpG</name>
    <name type="ordered locus">BWG_3117</name>
</gene>
<name>GLPG_ECOBW</name>
<dbReference type="EC" id="3.4.21.105" evidence="1"/>
<dbReference type="EMBL" id="CP001396">
    <property type="protein sequence ID" value="ACR64592.1"/>
    <property type="molecule type" value="Genomic_DNA"/>
</dbReference>
<dbReference type="RefSeq" id="WP_000928723.1">
    <property type="nucleotide sequence ID" value="NC_012759.1"/>
</dbReference>
<dbReference type="SMR" id="C4ZVX5"/>
<dbReference type="MEROPS" id="S54.016"/>
<dbReference type="GeneID" id="86862178"/>
<dbReference type="KEGG" id="ebw:BWG_3117"/>
<dbReference type="HOGENOM" id="CLU_058989_0_0_6"/>
<dbReference type="GO" id="GO:0005886">
    <property type="term" value="C:plasma membrane"/>
    <property type="evidence" value="ECO:0007669"/>
    <property type="project" value="UniProtKB-SubCell"/>
</dbReference>
<dbReference type="GO" id="GO:0004252">
    <property type="term" value="F:serine-type endopeptidase activity"/>
    <property type="evidence" value="ECO:0007669"/>
    <property type="project" value="UniProtKB-UniRule"/>
</dbReference>
<dbReference type="GO" id="GO:0006508">
    <property type="term" value="P:proteolysis"/>
    <property type="evidence" value="ECO:0007669"/>
    <property type="project" value="UniProtKB-UniRule"/>
</dbReference>
<dbReference type="FunFam" id="1.20.1540.10:FF:000003">
    <property type="entry name" value="Rhomboid protease GlpG"/>
    <property type="match status" value="1"/>
</dbReference>
<dbReference type="FunFam" id="3.30.70.2350:FF:000001">
    <property type="entry name" value="Rhomboid protease GlpG"/>
    <property type="match status" value="1"/>
</dbReference>
<dbReference type="Gene3D" id="3.30.70.2350">
    <property type="match status" value="1"/>
</dbReference>
<dbReference type="Gene3D" id="1.20.1540.10">
    <property type="entry name" value="Rhomboid-like"/>
    <property type="match status" value="1"/>
</dbReference>
<dbReference type="HAMAP" id="MF_01594">
    <property type="entry name" value="Rhomboid_GlpG"/>
    <property type="match status" value="1"/>
</dbReference>
<dbReference type="InterPro" id="IPR038236">
    <property type="entry name" value="GlpG_N_sf"/>
</dbReference>
<dbReference type="InterPro" id="IPR022732">
    <property type="entry name" value="Peptidase_S54_GlpG_N"/>
</dbReference>
<dbReference type="InterPro" id="IPR022764">
    <property type="entry name" value="Peptidase_S54_rhomboid_dom"/>
</dbReference>
<dbReference type="InterPro" id="IPR035952">
    <property type="entry name" value="Rhomboid-like_sf"/>
</dbReference>
<dbReference type="InterPro" id="IPR023662">
    <property type="entry name" value="Rhomboid_protease_GlpG"/>
</dbReference>
<dbReference type="NCBIfam" id="NF008155">
    <property type="entry name" value="PRK10907.1"/>
    <property type="match status" value="1"/>
</dbReference>
<dbReference type="NCBIfam" id="TIGR04239">
    <property type="entry name" value="rhombo_GlpG"/>
    <property type="match status" value="1"/>
</dbReference>
<dbReference type="PANTHER" id="PTHR43066:SF26">
    <property type="entry name" value="RHOMBOID PROTEASE GLPG"/>
    <property type="match status" value="1"/>
</dbReference>
<dbReference type="PANTHER" id="PTHR43066">
    <property type="entry name" value="RHOMBOID-RELATED PROTEIN"/>
    <property type="match status" value="1"/>
</dbReference>
<dbReference type="Pfam" id="PF01694">
    <property type="entry name" value="Rhomboid"/>
    <property type="match status" value="1"/>
</dbReference>
<dbReference type="Pfam" id="PF12122">
    <property type="entry name" value="Rhomboid_N"/>
    <property type="match status" value="1"/>
</dbReference>
<dbReference type="SUPFAM" id="SSF144091">
    <property type="entry name" value="Rhomboid-like"/>
    <property type="match status" value="1"/>
</dbReference>
<keyword id="KW-0997">Cell inner membrane</keyword>
<keyword id="KW-1003">Cell membrane</keyword>
<keyword id="KW-0378">Hydrolase</keyword>
<keyword id="KW-0472">Membrane</keyword>
<keyword id="KW-0645">Protease</keyword>
<keyword id="KW-0720">Serine protease</keyword>
<keyword id="KW-0812">Transmembrane</keyword>
<keyword id="KW-1133">Transmembrane helix</keyword>
<organism>
    <name type="scientific">Escherichia coli (strain K12 / MC4100 / BW2952)</name>
    <dbReference type="NCBI Taxonomy" id="595496"/>
    <lineage>
        <taxon>Bacteria</taxon>
        <taxon>Pseudomonadati</taxon>
        <taxon>Pseudomonadota</taxon>
        <taxon>Gammaproteobacteria</taxon>
        <taxon>Enterobacterales</taxon>
        <taxon>Enterobacteriaceae</taxon>
        <taxon>Escherichia</taxon>
    </lineage>
</organism>